<keyword id="KW-0010">Activator</keyword>
<keyword id="KW-0175">Coiled coil</keyword>
<keyword id="KW-0195">Cyclin</keyword>
<keyword id="KW-1048">Host nucleus</keyword>
<keyword id="KW-0945">Host-virus interaction</keyword>
<keyword id="KW-1120">Modulation of host cell cycle by viral cyclin-like protein</keyword>
<keyword id="KW-1121">Modulation of host cell cycle by virus</keyword>
<keyword id="KW-0553">Oncogene</keyword>
<keyword id="KW-1185">Reference proteome</keyword>
<keyword id="KW-0678">Repressor</keyword>
<evidence type="ECO:0000255" key="1"/>
<evidence type="ECO:0000269" key="2">
    <source>
    </source>
</evidence>
<evidence type="ECO:0000269" key="3">
    <source>
    </source>
</evidence>
<evidence type="ECO:0000269" key="4">
    <source>
    </source>
</evidence>
<evidence type="ECO:0000269" key="5">
    <source>
    </source>
</evidence>
<evidence type="ECO:0000305" key="6"/>
<proteinExistence type="evidence at protein level"/>
<feature type="chain" id="PRO_0000412274" description="Retroviral cyclin">
    <location>
        <begin position="1"/>
        <end position="297"/>
    </location>
</feature>
<feature type="domain" description="Cyclin N-terminal">
    <location>
        <begin position="21"/>
        <end position="113"/>
    </location>
</feature>
<feature type="region of interest" description="Transcription activation domain">
    <location>
        <begin position="21"/>
        <end position="113"/>
    </location>
</feature>
<feature type="coiled-coil region" evidence="1">
    <location>
        <begin position="222"/>
        <end position="270"/>
    </location>
</feature>
<protein>
    <recommendedName>
        <fullName>Retroviral cyclin</fullName>
        <shortName>Rv-cyclin</shortName>
    </recommendedName>
    <alternativeName>
        <fullName>ORF-A protein</fullName>
    </alternativeName>
</protein>
<reference key="1">
    <citation type="journal article" date="1995" name="J. Virol.">
        <title>Nucleotide sequence and protein analysis of a complex piscine retrovirus, walleye dermal sarcoma virus.</title>
        <authorList>
            <person name="Holzschu D.L."/>
            <person name="Martineau D."/>
            <person name="Fodor S.K."/>
            <person name="Vogt V.M."/>
            <person name="Bowser P.R."/>
            <person name="Casey J.W."/>
        </authorList>
    </citation>
    <scope>NUCLEOTIDE SEQUENCE [GENOMIC RNA]</scope>
</reference>
<reference key="2">
    <citation type="journal article" date="2007" name="J. Gen. Virol.">
        <title>Establishment of productively infected walleye dermal sarcoma explant cells.</title>
        <authorList>
            <person name="Rovnak J."/>
            <person name="Casey R.N."/>
            <person name="Brewster C.D."/>
            <person name="Casey J.W."/>
            <person name="Quackenbush S.L."/>
        </authorList>
    </citation>
    <scope>NUCLEOTIDE SEQUENCE [GENOMIC DNA]</scope>
    <source>
        <strain>NY 2003</strain>
    </source>
</reference>
<reference key="3">
    <citation type="submission" date="1997-11" db="EMBL/GenBank/DDBJ databases">
        <authorList>
            <person name="Chappey C."/>
        </authorList>
    </citation>
    <scope>NUCLEOTIDE SEQUENCE [GENOMIC RNA]</scope>
</reference>
<reference key="4">
    <citation type="journal article" date="2001" name="Virology">
        <title>Intracellular targeting of walleye dermal sarcoma virus Orf A (rv-cyclin).</title>
        <authorList>
            <person name="Rovnak J."/>
            <person name="Casey J.W."/>
            <person name="Quackenbush S.L."/>
        </authorList>
    </citation>
    <scope>FUNCTION</scope>
    <scope>SUBCELLULAR LOCATION</scope>
</reference>
<reference key="5">
    <citation type="journal article" date="2006" name="J. Virol.">
        <title>Walleye dermal sarcoma virus retroviral cyclin directly contacts TAF9.</title>
        <authorList>
            <person name="Rovnak J."/>
            <person name="Quackenbush S.L."/>
        </authorList>
    </citation>
    <scope>FUNCTION</scope>
    <scope>INTERACTION WITH WALLEYE TAF9</scope>
</reference>
<reference key="6">
    <citation type="journal article" date="2009" name="Virology">
        <title>Walleye dermal sarcoma virus rv-cyclin inhibits NF-kappaB-dependent transcription.</title>
        <authorList>
            <person name="Quackenbush S.L."/>
            <person name="Linton A."/>
            <person name="Brewster C.D."/>
            <person name="Rovnak J."/>
        </authorList>
    </citation>
    <scope>FUNCTION</scope>
</reference>
<reference key="7">
    <citation type="journal article" date="2011" name="Virology">
        <title>The retroviral cyclin of walleye dermal sarcoma virus binds cyclin-dependent kinases 3 and 8.</title>
        <authorList>
            <person name="Brewster C.D."/>
            <person name="Birkenheuer C.H."/>
            <person name="Vogt M.B."/>
            <person name="Quackenbush S.L."/>
            <person name="Rovnak J."/>
        </authorList>
    </citation>
    <scope>INTERACTION WITH HUMAN CDK3 AND CDK8</scope>
</reference>
<gene>
    <name type="primary">orfA</name>
</gene>
<organismHost>
    <name type="scientific">Sander vitreus</name>
    <name type="common">Walleye</name>
    <name type="synonym">Perca vitrea</name>
    <dbReference type="NCBI Taxonomy" id="283036"/>
</organismHost>
<dbReference type="EMBL" id="L41838">
    <property type="protein sequence ID" value="AAA99528.1"/>
    <property type="molecule type" value="Genomic_RNA"/>
</dbReference>
<dbReference type="EMBL" id="EF428979">
    <property type="protein sequence ID" value="ABO25844.1"/>
    <property type="molecule type" value="Genomic_DNA"/>
</dbReference>
<dbReference type="EMBL" id="AF033822">
    <property type="protein sequence ID" value="AAC82609.1"/>
    <property type="molecule type" value="Genomic_RNA"/>
</dbReference>
<dbReference type="PIR" id="T09396">
    <property type="entry name" value="T09396"/>
</dbReference>
<dbReference type="RefSeq" id="NP_045940.1">
    <property type="nucleotide sequence ID" value="NC_001867.1"/>
</dbReference>
<dbReference type="SMR" id="Q88939"/>
<dbReference type="KEGG" id="vg:1403500"/>
<dbReference type="Proteomes" id="UP000007081">
    <property type="component" value="Segment"/>
</dbReference>
<dbReference type="Proteomes" id="UP000008337">
    <property type="component" value="Genome"/>
</dbReference>
<dbReference type="Proteomes" id="UP000156462">
    <property type="component" value="Genome"/>
</dbReference>
<dbReference type="GO" id="GO:0042025">
    <property type="term" value="C:host cell nucleus"/>
    <property type="evidence" value="ECO:0007669"/>
    <property type="project" value="UniProtKB-SubCell"/>
</dbReference>
<dbReference type="GO" id="GO:0044071">
    <property type="term" value="P:symbiont-mediated perturbation of host cell cycle progression"/>
    <property type="evidence" value="ECO:0007669"/>
    <property type="project" value="UniProtKB-KW"/>
</dbReference>
<dbReference type="InterPro" id="IPR036915">
    <property type="entry name" value="Cyclin-like_sf"/>
</dbReference>
<dbReference type="InterPro" id="IPR012167">
    <property type="entry name" value="Cyclin_epsilonretrovir"/>
</dbReference>
<dbReference type="PIRSF" id="PIRSF015200">
    <property type="entry name" value="Cyclin_WDSV"/>
    <property type="match status" value="1"/>
</dbReference>
<dbReference type="SUPFAM" id="SSF47954">
    <property type="entry name" value="Cyclin-like"/>
    <property type="match status" value="1"/>
</dbReference>
<sequence>MDIPVEFLTAQEPLSYGHIPPVYWKELLNWIDRILTHNQATPNTWEATHMVLLKLHGTLSFSNPAQLPLVAAACLQIAAKHTEAHSRLADPDYITMLGDGVYTKPSLLLTETMALFIVGGHVGAYTLAACDWLLGSLPFSQAENDLLHPYMYHYIKLSYRHRTPDYHSSPALRAAVVIAAAVKGADLLEMNMLFIMMYHLTHISTASLSLGLTHFTAALQRQINLDFAEAEQREAAERRALLEREREQQLQEARERLDDVMAVLEAEVAITITTATEGTDAEDTSEVDVINVVDPIG</sequence>
<comment type="function">
    <text evidence="2 3 4">Transforming protein which induces the development of dermal sarcomas. Induces positive and negative regulation of transcription from host and viral promoters by interacting with various cellular factors involved in protein transcription regulation.</text>
</comment>
<comment type="subunit">
    <text evidence="3 5">Interacts (via transcription activation domain) with host TAF9 in vitro. Interacts with host CDK3 and CDK8.</text>
</comment>
<comment type="subcellular location">
    <subcellularLocation>
        <location evidence="2">Host nucleus</location>
    </subcellularLocation>
    <text>Concentrated in interchromatin granule clusters and perichromatin fibrils.</text>
</comment>
<comment type="domain">
    <text>Contains two known functional domains, a cyclin box motif and a carboxy terminal transcription activation domain.</text>
</comment>
<comment type="similarity">
    <text evidence="6">Belongs to the cyclin family.</text>
</comment>
<accession>Q88939</accession>
<name>CYCL_WDSV</name>
<organism>
    <name type="scientific">Walleye dermal sarcoma virus</name>
    <name type="common">WDSV</name>
    <dbReference type="NCBI Taxonomy" id="39720"/>
    <lineage>
        <taxon>Viruses</taxon>
        <taxon>Riboviria</taxon>
        <taxon>Pararnavirae</taxon>
        <taxon>Artverviricota</taxon>
        <taxon>Revtraviricetes</taxon>
        <taxon>Ortervirales</taxon>
        <taxon>Retroviridae</taxon>
        <taxon>Orthoretrovirinae</taxon>
        <taxon>Epsilonretrovirus</taxon>
    </lineage>
</organism>